<protein>
    <recommendedName>
        <fullName>Suppressor of lethality of KEX2 GAS1 double null mutant protein 1</fullName>
    </recommendedName>
</protein>
<name>SKG1_YEAS2</name>
<comment type="function">
    <text evidence="1">Plays a role in cell wall integrity. Affects the cell wall polymer composition in the growing region of the cell (By similarity).</text>
</comment>
<comment type="subcellular location">
    <subcellularLocation>
        <location evidence="1">Cell membrane</location>
        <topology evidence="1">Single-pass type III membrane protein</topology>
        <orientation evidence="1">Cytoplasmic side</orientation>
    </subcellularLocation>
    <subcellularLocation>
        <location evidence="1">Bud membrane</location>
        <topology evidence="1">Single-pass type III membrane protein</topology>
        <orientation evidence="1">Cytoplasmic side</orientation>
    </subcellularLocation>
    <text evidence="1">Localizes on the inner surface of the plasma membrane at the bud and in the daughter cell. Localizes at an incipient bud site in the cells with emerging buds, a bud tip in small- or medium-budded cells, and a cell periphery in large-budded cells.</text>
</comment>
<comment type="similarity">
    <text evidence="5">Belongs to the SKG1 family.</text>
</comment>
<proteinExistence type="inferred from homology"/>
<accession>C7GXB2</accession>
<dbReference type="EMBL" id="ACFL01000426">
    <property type="protein sequence ID" value="EEU04544.1"/>
    <property type="molecule type" value="Genomic_DNA"/>
</dbReference>
<dbReference type="Proteomes" id="UP000008073">
    <property type="component" value="Unassembled WGS sequence"/>
</dbReference>
<dbReference type="GO" id="GO:0033101">
    <property type="term" value="C:cellular bud membrane"/>
    <property type="evidence" value="ECO:0007669"/>
    <property type="project" value="UniProtKB-SubCell"/>
</dbReference>
<dbReference type="GO" id="GO:0071555">
    <property type="term" value="P:cell wall organization"/>
    <property type="evidence" value="ECO:0007669"/>
    <property type="project" value="UniProtKB-KW"/>
</dbReference>
<reference key="1">
    <citation type="journal article" date="2009" name="Genome Res.">
        <title>Genome structure of a Saccharomyces cerevisiae strain widely used in bioethanol production.</title>
        <authorList>
            <person name="Argueso J.L."/>
            <person name="Carazzolle M.F."/>
            <person name="Mieczkowski P.A."/>
            <person name="Duarte F.M."/>
            <person name="Netto O.V.C."/>
            <person name="Missawa S.K."/>
            <person name="Galzerani F."/>
            <person name="Costa G.G.L."/>
            <person name="Vidal R.O."/>
            <person name="Noronha M.F."/>
            <person name="Dominska M."/>
            <person name="Andrietta M.G.S."/>
            <person name="Andrietta S.R."/>
            <person name="Cunha A.F."/>
            <person name="Gomes L.H."/>
            <person name="Tavares F.C.A."/>
            <person name="Alcarde A.R."/>
            <person name="Dietrich F.S."/>
            <person name="McCusker J.H."/>
            <person name="Petes T.D."/>
            <person name="Pereira G.A.G."/>
        </authorList>
    </citation>
    <scope>NUCLEOTIDE SEQUENCE [LARGE SCALE GENOMIC DNA]</scope>
    <source>
        <strain>JAY291</strain>
    </source>
</reference>
<keyword id="KW-1003">Cell membrane</keyword>
<keyword id="KW-0961">Cell wall biogenesis/degradation</keyword>
<keyword id="KW-0472">Membrane</keyword>
<keyword id="KW-0597">Phosphoprotein</keyword>
<keyword id="KW-0735">Signal-anchor</keyword>
<keyword id="KW-0812">Transmembrane</keyword>
<keyword id="KW-1133">Transmembrane helix</keyword>
<evidence type="ECO:0000250" key="1"/>
<evidence type="ECO:0000250" key="2">
    <source>
        <dbReference type="UniProtKB" id="P36169"/>
    </source>
</evidence>
<evidence type="ECO:0000255" key="3"/>
<evidence type="ECO:0000256" key="4">
    <source>
        <dbReference type="SAM" id="MobiDB-lite"/>
    </source>
</evidence>
<evidence type="ECO:0000305" key="5"/>
<feature type="chain" id="PRO_0000399673" description="Suppressor of lethality of KEX2 GAS1 double null mutant protein 1">
    <location>
        <begin position="1"/>
        <end position="355"/>
    </location>
</feature>
<feature type="topological domain" description="Extracellular" evidence="3">
    <location>
        <begin position="1"/>
        <end position="8"/>
    </location>
</feature>
<feature type="transmembrane region" description="Helical; Signal-anchor for type III membrane protein" evidence="3">
    <location>
        <begin position="9"/>
        <end position="29"/>
    </location>
</feature>
<feature type="topological domain" description="Cytoplasmic" evidence="3">
    <location>
        <begin position="30"/>
        <end position="355"/>
    </location>
</feature>
<feature type="region of interest" description="Disordered" evidence="4">
    <location>
        <begin position="70"/>
        <end position="114"/>
    </location>
</feature>
<feature type="compositionally biased region" description="Basic and acidic residues" evidence="4">
    <location>
        <begin position="92"/>
        <end position="108"/>
    </location>
</feature>
<feature type="modified residue" description="Phosphoserine" evidence="2">
    <location>
        <position position="142"/>
    </location>
</feature>
<feature type="modified residue" description="Phosphothreonine" evidence="2">
    <location>
        <position position="273"/>
    </location>
</feature>
<organism>
    <name type="scientific">Saccharomyces cerevisiae (strain JAY291)</name>
    <name type="common">Baker's yeast</name>
    <dbReference type="NCBI Taxonomy" id="574961"/>
    <lineage>
        <taxon>Eukaryota</taxon>
        <taxon>Fungi</taxon>
        <taxon>Dikarya</taxon>
        <taxon>Ascomycota</taxon>
        <taxon>Saccharomycotina</taxon>
        <taxon>Saccharomycetes</taxon>
        <taxon>Saccharomycetales</taxon>
        <taxon>Saccharomycetaceae</taxon>
        <taxon>Saccharomyces</taxon>
    </lineage>
</organism>
<sequence>MTASTSVAVGCAVGIPVGVGIIIAVCFWFNLQKRYKREEQDDRELERAIYDESGFVSFDNFGPLRDSKDEAALASSELKNPDHTSGSSEGSAHPEEKDGKSRDQEKPLGKKNSKYYVPAYRRKINLLQVRNNNYGNNARQKSVVDLPSINNSSNVSLSSSQRHITKRQISVYDQMVPVISDEGPKFFADPSSDTNTSNDQNKASMIELKHNTRQSSNENLIRKLQNQDFGSYYPRRASSSFLNGNISNASFHTRNSSITSVNKRDALEDVFATPKSAAQSQLPNTFDKDNEGIDADHSVKDSRSAITDKDKDIYKLQNNYDVGNIGEIAEEDQYENEFTNYSQSKREFIESLRPK</sequence>
<gene>
    <name type="primary">SKG1</name>
    <name type="ORF">C1Q_05175</name>
</gene>